<feature type="initiator methionine" description="Removed" evidence="4 5 6">
    <location>
        <position position="1"/>
    </location>
</feature>
<feature type="chain" id="PRO_0000193587" description="Mitochondrial import inner membrane translocase subunit Tim8 B">
    <location>
        <begin position="2"/>
        <end position="83"/>
    </location>
</feature>
<feature type="short sequence motif" description="Twin CX3C motif">
    <location>
        <begin position="36"/>
        <end position="59"/>
    </location>
</feature>
<feature type="modified residue" description="N-acetylalanine" evidence="4 5 6">
    <location>
        <position position="2"/>
    </location>
</feature>
<feature type="disulfide bond" evidence="1">
    <location>
        <begin position="36"/>
        <end position="59"/>
    </location>
</feature>
<feature type="disulfide bond" evidence="1">
    <location>
        <begin position="40"/>
        <end position="55"/>
    </location>
</feature>
<keyword id="KW-0007">Acetylation</keyword>
<keyword id="KW-0143">Chaperone</keyword>
<keyword id="KW-1015">Disulfide bond</keyword>
<keyword id="KW-0472">Membrane</keyword>
<keyword id="KW-0479">Metal-binding</keyword>
<keyword id="KW-0496">Mitochondrion</keyword>
<keyword id="KW-0999">Mitochondrion inner membrane</keyword>
<keyword id="KW-0653">Protein transport</keyword>
<keyword id="KW-1267">Proteomics identification</keyword>
<keyword id="KW-1185">Reference proteome</keyword>
<keyword id="KW-0811">Translocation</keyword>
<keyword id="KW-0813">Transport</keyword>
<keyword id="KW-0862">Zinc</keyword>
<evidence type="ECO:0000250" key="1"/>
<evidence type="ECO:0000269" key="2">
    <source>
    </source>
</evidence>
<evidence type="ECO:0000305" key="3"/>
<evidence type="ECO:0007744" key="4">
    <source>
    </source>
</evidence>
<evidence type="ECO:0007744" key="5">
    <source>
    </source>
</evidence>
<evidence type="ECO:0007744" key="6">
    <source>
    </source>
</evidence>
<dbReference type="EMBL" id="AF152350">
    <property type="protein sequence ID" value="AAF15100.1"/>
    <property type="molecule type" value="mRNA"/>
</dbReference>
<dbReference type="EMBL" id="AF150087">
    <property type="protein sequence ID" value="AAD39994.1"/>
    <property type="molecule type" value="mRNA"/>
</dbReference>
<dbReference type="EMBL" id="AK312169">
    <property type="protein sequence ID" value="BAG35103.1"/>
    <property type="molecule type" value="mRNA"/>
</dbReference>
<dbReference type="EMBL" id="EF445036">
    <property type="protein sequence ID" value="ACA06083.1"/>
    <property type="molecule type" value="Genomic_DNA"/>
</dbReference>
<dbReference type="EMBL" id="BC000711">
    <property type="protein sequence ID" value="AAH00711.1"/>
    <property type="molecule type" value="mRNA"/>
</dbReference>
<dbReference type="EMBL" id="BC105986">
    <property type="protein sequence ID" value="AAI05987.1"/>
    <property type="molecule type" value="mRNA"/>
</dbReference>
<dbReference type="EMBL" id="BC106067">
    <property type="protein sequence ID" value="AAI06068.1"/>
    <property type="molecule type" value="mRNA"/>
</dbReference>
<dbReference type="EMBL" id="AF165967">
    <property type="protein sequence ID" value="AAD51801.1"/>
    <property type="molecule type" value="mRNA"/>
</dbReference>
<dbReference type="CCDS" id="CCDS8357.3"/>
<dbReference type="RefSeq" id="NP_036591.3">
    <property type="nucleotide sequence ID" value="NM_012459.4"/>
</dbReference>
<dbReference type="SMR" id="Q9Y5J9"/>
<dbReference type="BioGRID" id="117725">
    <property type="interactions" value="56"/>
</dbReference>
<dbReference type="ComplexPortal" id="CPX-6132">
    <property type="entry name" value="TIM8B-TIM13 mitochondrial intermembrane space protein transporter complex"/>
</dbReference>
<dbReference type="FunCoup" id="Q9Y5J9">
    <property type="interactions" value="1096"/>
</dbReference>
<dbReference type="IntAct" id="Q9Y5J9">
    <property type="interactions" value="41"/>
</dbReference>
<dbReference type="MINT" id="Q9Y5J9"/>
<dbReference type="STRING" id="9606.ENSP00000438455"/>
<dbReference type="iPTMnet" id="Q9Y5J9"/>
<dbReference type="PhosphoSitePlus" id="Q9Y5J9"/>
<dbReference type="SwissPalm" id="Q9Y5J9"/>
<dbReference type="BioMuta" id="TIMM8B"/>
<dbReference type="jPOST" id="Q9Y5J9"/>
<dbReference type="MassIVE" id="Q9Y5J9"/>
<dbReference type="PaxDb" id="9606-ENSP00000438455"/>
<dbReference type="PeptideAtlas" id="Q9Y5J9"/>
<dbReference type="ProteomicsDB" id="86423"/>
<dbReference type="Pumba" id="Q9Y5J9"/>
<dbReference type="TopDownProteomics" id="Q9Y5J9"/>
<dbReference type="Antibodypedia" id="32120">
    <property type="antibodies" value="85 antibodies from 15 providers"/>
</dbReference>
<dbReference type="DNASU" id="26521"/>
<dbReference type="Ensembl" id="ENST00000504148.3">
    <property type="protein sequence ID" value="ENSP00000422122.2"/>
    <property type="gene ID" value="ENSG00000150779.12"/>
</dbReference>
<dbReference type="GeneID" id="26521"/>
<dbReference type="KEGG" id="hsa:26521"/>
<dbReference type="MANE-Select" id="ENST00000504148.3">
    <property type="protein sequence ID" value="ENSP00000422122.2"/>
    <property type="RefSeq nucleotide sequence ID" value="NM_012459.4"/>
    <property type="RefSeq protein sequence ID" value="NP_036591.3"/>
</dbReference>
<dbReference type="UCSC" id="uc058hho.1">
    <property type="organism name" value="human"/>
</dbReference>
<dbReference type="AGR" id="HGNC:11818"/>
<dbReference type="CTD" id="26521"/>
<dbReference type="DisGeNET" id="26521"/>
<dbReference type="GeneCards" id="TIMM8B"/>
<dbReference type="HGNC" id="HGNC:11818">
    <property type="gene designation" value="TIMM8B"/>
</dbReference>
<dbReference type="HPA" id="ENSG00000150779">
    <property type="expression patterns" value="Low tissue specificity"/>
</dbReference>
<dbReference type="MIM" id="606659">
    <property type="type" value="gene"/>
</dbReference>
<dbReference type="neXtProt" id="NX_Q9Y5J9"/>
<dbReference type="OpenTargets" id="ENSG00000150779"/>
<dbReference type="PharmGKB" id="PA36524"/>
<dbReference type="VEuPathDB" id="HostDB:ENSG00000150779"/>
<dbReference type="eggNOG" id="KOG3489">
    <property type="taxonomic scope" value="Eukaryota"/>
</dbReference>
<dbReference type="GeneTree" id="ENSGT00940000155479"/>
<dbReference type="HOGENOM" id="CLU_141397_1_2_1"/>
<dbReference type="InParanoid" id="Q9Y5J9"/>
<dbReference type="OMA" id="NEICWDK"/>
<dbReference type="OrthoDB" id="9513518at2759"/>
<dbReference type="PAN-GO" id="Q9Y5J9">
    <property type="GO annotations" value="0 GO annotations based on evolutionary models"/>
</dbReference>
<dbReference type="PhylomeDB" id="Q9Y5J9"/>
<dbReference type="PathwayCommons" id="Q9Y5J9"/>
<dbReference type="Reactome" id="R-HSA-1268020">
    <property type="pathway name" value="Mitochondrial protein import"/>
</dbReference>
<dbReference type="SignaLink" id="Q9Y5J9"/>
<dbReference type="BioGRID-ORCS" id="26521">
    <property type="hits" value="20 hits in 1167 CRISPR screens"/>
</dbReference>
<dbReference type="CD-CODE" id="91857CE7">
    <property type="entry name" value="Nucleolus"/>
</dbReference>
<dbReference type="ChiTaRS" id="TIMM8B">
    <property type="organism name" value="human"/>
</dbReference>
<dbReference type="GenomeRNAi" id="26521"/>
<dbReference type="Pharos" id="Q9Y5J9">
    <property type="development level" value="Tbio"/>
</dbReference>
<dbReference type="PRO" id="PR:Q9Y5J9"/>
<dbReference type="Proteomes" id="UP000005640">
    <property type="component" value="Chromosome 11"/>
</dbReference>
<dbReference type="RNAct" id="Q9Y5J9">
    <property type="molecule type" value="protein"/>
</dbReference>
<dbReference type="Bgee" id="ENSG00000150779">
    <property type="expression patterns" value="Expressed in tongue squamous epithelium and 210 other cell types or tissues"/>
</dbReference>
<dbReference type="ExpressionAtlas" id="Q9Y5J9">
    <property type="expression patterns" value="baseline and differential"/>
</dbReference>
<dbReference type="GO" id="GO:0005615">
    <property type="term" value="C:extracellular space"/>
    <property type="evidence" value="ECO:0007005"/>
    <property type="project" value="UniProtKB"/>
</dbReference>
<dbReference type="GO" id="GO:0005743">
    <property type="term" value="C:mitochondrial inner membrane"/>
    <property type="evidence" value="ECO:0007669"/>
    <property type="project" value="UniProtKB-SubCell"/>
</dbReference>
<dbReference type="GO" id="GO:0005758">
    <property type="term" value="C:mitochondrial intermembrane space"/>
    <property type="evidence" value="ECO:0000303"/>
    <property type="project" value="ComplexPortal"/>
</dbReference>
<dbReference type="GO" id="GO:0042719">
    <property type="term" value="C:mitochondrial intermembrane space protein transporter complex"/>
    <property type="evidence" value="ECO:0000250"/>
    <property type="project" value="ComplexPortal"/>
</dbReference>
<dbReference type="GO" id="GO:0005739">
    <property type="term" value="C:mitochondrion"/>
    <property type="evidence" value="ECO:0006056"/>
    <property type="project" value="FlyBase"/>
</dbReference>
<dbReference type="GO" id="GO:0140318">
    <property type="term" value="F:protein transporter activity"/>
    <property type="evidence" value="ECO:0000250"/>
    <property type="project" value="FlyBase"/>
</dbReference>
<dbReference type="GO" id="GO:0008270">
    <property type="term" value="F:zinc ion binding"/>
    <property type="evidence" value="ECO:0000304"/>
    <property type="project" value="ProtInc"/>
</dbReference>
<dbReference type="GO" id="GO:0045039">
    <property type="term" value="P:protein insertion into mitochondrial inner membrane"/>
    <property type="evidence" value="ECO:0000250"/>
    <property type="project" value="FlyBase"/>
</dbReference>
<dbReference type="GO" id="GO:0006626">
    <property type="term" value="P:protein targeting to mitochondrion"/>
    <property type="evidence" value="ECO:0000304"/>
    <property type="project" value="ProtInc"/>
</dbReference>
<dbReference type="GO" id="GO:0007605">
    <property type="term" value="P:sensory perception of sound"/>
    <property type="evidence" value="ECO:0000304"/>
    <property type="project" value="ProtInc"/>
</dbReference>
<dbReference type="FunFam" id="1.10.287.810:FF:000005">
    <property type="entry name" value="Mitochondrial import inner membrane translocase subunit Tim8 B"/>
    <property type="match status" value="1"/>
</dbReference>
<dbReference type="Gene3D" id="1.10.287.810">
    <property type="entry name" value="Mitochondrial import inner membrane translocase subunit tim13 like domains"/>
    <property type="match status" value="1"/>
</dbReference>
<dbReference type="InterPro" id="IPR004217">
    <property type="entry name" value="Tim10-like"/>
</dbReference>
<dbReference type="InterPro" id="IPR035427">
    <property type="entry name" value="Tim10-like_dom_sf"/>
</dbReference>
<dbReference type="Pfam" id="PF02953">
    <property type="entry name" value="zf-Tim10_DDP"/>
    <property type="match status" value="1"/>
</dbReference>
<dbReference type="SUPFAM" id="SSF144122">
    <property type="entry name" value="Tim10-like"/>
    <property type="match status" value="1"/>
</dbReference>
<name>TIM8B_HUMAN</name>
<proteinExistence type="evidence at protein level"/>
<protein>
    <recommendedName>
        <fullName>Mitochondrial import inner membrane translocase subunit Tim8 B</fullName>
    </recommendedName>
    <alternativeName>
        <fullName>DDP-like protein</fullName>
    </alternativeName>
    <alternativeName>
        <fullName>Deafness dystonia protein 2</fullName>
    </alternativeName>
</protein>
<organism>
    <name type="scientific">Homo sapiens</name>
    <name type="common">Human</name>
    <dbReference type="NCBI Taxonomy" id="9606"/>
    <lineage>
        <taxon>Eukaryota</taxon>
        <taxon>Metazoa</taxon>
        <taxon>Chordata</taxon>
        <taxon>Craniata</taxon>
        <taxon>Vertebrata</taxon>
        <taxon>Euteleostomi</taxon>
        <taxon>Mammalia</taxon>
        <taxon>Eutheria</taxon>
        <taxon>Euarchontoglires</taxon>
        <taxon>Primates</taxon>
        <taxon>Haplorrhini</taxon>
        <taxon>Catarrhini</taxon>
        <taxon>Hominidae</taxon>
        <taxon>Homo</taxon>
    </lineage>
</organism>
<gene>
    <name type="primary">TIMM8B</name>
    <name type="synonym">DDP2</name>
    <name type="synonym">DDPL</name>
    <name type="synonym">TIM8B</name>
</gene>
<sequence>MAELGEADEAELQRLVAAEQQKAQFTAQVHHFMELCWDKCVEKPGNRLDSRTENCLSSCVDRFIDTTLAITSRFAQIVQKGGQ</sequence>
<reference key="1">
    <citation type="journal article" date="1999" name="Genomics">
        <title>The human family of deafness/dystonia peptide (DDP) related mitochondrial import proteins.</title>
        <authorList>
            <person name="Jin H."/>
            <person name="Kendall E."/>
            <person name="Freeman T.C."/>
            <person name="Roberts R.G."/>
            <person name="Vetrie D.L.P."/>
        </authorList>
    </citation>
    <scope>NUCLEOTIDE SEQUENCE [MRNA]</scope>
</reference>
<reference key="2">
    <citation type="journal article" date="1999" name="FEBS Lett.">
        <title>The mitochondrial TIM22 preprotein translocase is highly conserved throughout the eukaryotic kingdom.</title>
        <authorList>
            <person name="Bauer M.F."/>
            <person name="Rothbauer U."/>
            <person name="Muehlenbein N."/>
            <person name="Smith R.J.H."/>
            <person name="Gerbitz K.-D."/>
            <person name="Neupert W."/>
            <person name="Brunner M."/>
            <person name="Hofmann S."/>
        </authorList>
    </citation>
    <scope>NUCLEOTIDE SEQUENCE [MRNA]</scope>
    <scope>TISSUE SPECIFICITY</scope>
</reference>
<reference key="3">
    <citation type="journal article" date="2004" name="Nat. Genet.">
        <title>Complete sequencing and characterization of 21,243 full-length human cDNAs.</title>
        <authorList>
            <person name="Ota T."/>
            <person name="Suzuki Y."/>
            <person name="Nishikawa T."/>
            <person name="Otsuki T."/>
            <person name="Sugiyama T."/>
            <person name="Irie R."/>
            <person name="Wakamatsu A."/>
            <person name="Hayashi K."/>
            <person name="Sato H."/>
            <person name="Nagai K."/>
            <person name="Kimura K."/>
            <person name="Makita H."/>
            <person name="Sekine M."/>
            <person name="Obayashi M."/>
            <person name="Nishi T."/>
            <person name="Shibahara T."/>
            <person name="Tanaka T."/>
            <person name="Ishii S."/>
            <person name="Yamamoto J."/>
            <person name="Saito K."/>
            <person name="Kawai Y."/>
            <person name="Isono Y."/>
            <person name="Nakamura Y."/>
            <person name="Nagahari K."/>
            <person name="Murakami K."/>
            <person name="Yasuda T."/>
            <person name="Iwayanagi T."/>
            <person name="Wagatsuma M."/>
            <person name="Shiratori A."/>
            <person name="Sudo H."/>
            <person name="Hosoiri T."/>
            <person name="Kaku Y."/>
            <person name="Kodaira H."/>
            <person name="Kondo H."/>
            <person name="Sugawara M."/>
            <person name="Takahashi M."/>
            <person name="Kanda K."/>
            <person name="Yokoi T."/>
            <person name="Furuya T."/>
            <person name="Kikkawa E."/>
            <person name="Omura Y."/>
            <person name="Abe K."/>
            <person name="Kamihara K."/>
            <person name="Katsuta N."/>
            <person name="Sato K."/>
            <person name="Tanikawa M."/>
            <person name="Yamazaki M."/>
            <person name="Ninomiya K."/>
            <person name="Ishibashi T."/>
            <person name="Yamashita H."/>
            <person name="Murakawa K."/>
            <person name="Fujimori K."/>
            <person name="Tanai H."/>
            <person name="Kimata M."/>
            <person name="Watanabe M."/>
            <person name="Hiraoka S."/>
            <person name="Chiba Y."/>
            <person name="Ishida S."/>
            <person name="Ono Y."/>
            <person name="Takiguchi S."/>
            <person name="Watanabe S."/>
            <person name="Yosida M."/>
            <person name="Hotuta T."/>
            <person name="Kusano J."/>
            <person name="Kanehori K."/>
            <person name="Takahashi-Fujii A."/>
            <person name="Hara H."/>
            <person name="Tanase T.-O."/>
            <person name="Nomura Y."/>
            <person name="Togiya S."/>
            <person name="Komai F."/>
            <person name="Hara R."/>
            <person name="Takeuchi K."/>
            <person name="Arita M."/>
            <person name="Imose N."/>
            <person name="Musashino K."/>
            <person name="Yuuki H."/>
            <person name="Oshima A."/>
            <person name="Sasaki N."/>
            <person name="Aotsuka S."/>
            <person name="Yoshikawa Y."/>
            <person name="Matsunawa H."/>
            <person name="Ichihara T."/>
            <person name="Shiohata N."/>
            <person name="Sano S."/>
            <person name="Moriya S."/>
            <person name="Momiyama H."/>
            <person name="Satoh N."/>
            <person name="Takami S."/>
            <person name="Terashima Y."/>
            <person name="Suzuki O."/>
            <person name="Nakagawa S."/>
            <person name="Senoh A."/>
            <person name="Mizoguchi H."/>
            <person name="Goto Y."/>
            <person name="Shimizu F."/>
            <person name="Wakebe H."/>
            <person name="Hishigaki H."/>
            <person name="Watanabe T."/>
            <person name="Sugiyama A."/>
            <person name="Takemoto M."/>
            <person name="Kawakami B."/>
            <person name="Yamazaki M."/>
            <person name="Watanabe K."/>
            <person name="Kumagai A."/>
            <person name="Itakura S."/>
            <person name="Fukuzumi Y."/>
            <person name="Fujimori Y."/>
            <person name="Komiyama M."/>
            <person name="Tashiro H."/>
            <person name="Tanigami A."/>
            <person name="Fujiwara T."/>
            <person name="Ono T."/>
            <person name="Yamada K."/>
            <person name="Fujii Y."/>
            <person name="Ozaki K."/>
            <person name="Hirao M."/>
            <person name="Ohmori Y."/>
            <person name="Kawabata A."/>
            <person name="Hikiji T."/>
            <person name="Kobatake N."/>
            <person name="Inagaki H."/>
            <person name="Ikema Y."/>
            <person name="Okamoto S."/>
            <person name="Okitani R."/>
            <person name="Kawakami T."/>
            <person name="Noguchi S."/>
            <person name="Itoh T."/>
            <person name="Shigeta K."/>
            <person name="Senba T."/>
            <person name="Matsumura K."/>
            <person name="Nakajima Y."/>
            <person name="Mizuno T."/>
            <person name="Morinaga M."/>
            <person name="Sasaki M."/>
            <person name="Togashi T."/>
            <person name="Oyama M."/>
            <person name="Hata H."/>
            <person name="Watanabe M."/>
            <person name="Komatsu T."/>
            <person name="Mizushima-Sugano J."/>
            <person name="Satoh T."/>
            <person name="Shirai Y."/>
            <person name="Takahashi Y."/>
            <person name="Nakagawa K."/>
            <person name="Okumura K."/>
            <person name="Nagase T."/>
            <person name="Nomura N."/>
            <person name="Kikuchi H."/>
            <person name="Masuho Y."/>
            <person name="Yamashita R."/>
            <person name="Nakai K."/>
            <person name="Yada T."/>
            <person name="Nakamura Y."/>
            <person name="Ohara O."/>
            <person name="Isogai T."/>
            <person name="Sugano S."/>
        </authorList>
    </citation>
    <scope>NUCLEOTIDE SEQUENCE [LARGE SCALE MRNA]</scope>
    <source>
        <tissue>Brain</tissue>
    </source>
</reference>
<reference key="4">
    <citation type="submission" date="2007-02" db="EMBL/GenBank/DDBJ databases">
        <authorList>
            <consortium name="NHLBI resequencing and genotyping service (RS&amp;G)"/>
        </authorList>
    </citation>
    <scope>NUCLEOTIDE SEQUENCE [GENOMIC DNA]</scope>
</reference>
<reference key="5">
    <citation type="journal article" date="2004" name="Genome Res.">
        <title>The status, quality, and expansion of the NIH full-length cDNA project: the Mammalian Gene Collection (MGC).</title>
        <authorList>
            <consortium name="The MGC Project Team"/>
        </authorList>
    </citation>
    <scope>NUCLEOTIDE SEQUENCE [LARGE SCALE MRNA]</scope>
    <source>
        <tissue>Lung</tissue>
        <tissue>Mammary gland</tissue>
        <tissue>Testis</tissue>
    </source>
</reference>
<reference key="6">
    <citation type="submission" date="1999-07" db="EMBL/GenBank/DDBJ databases">
        <title>Molecular cloning of DDP-like gene.</title>
        <authorList>
            <person name="Xia J.-H."/>
            <person name="He Y.-G."/>
            <person name="Yu K.-P."/>
            <person name="Zheng Z.-H."/>
            <person name="Tan S."/>
        </authorList>
    </citation>
    <scope>NUCLEOTIDE SEQUENCE [MRNA] OF 33-83</scope>
    <source>
        <tissue>Heart</tissue>
    </source>
</reference>
<reference key="7">
    <citation type="journal article" date="2009" name="Anal. Chem.">
        <title>Lys-N and trypsin cover complementary parts of the phosphoproteome in a refined SCX-based approach.</title>
        <authorList>
            <person name="Gauci S."/>
            <person name="Helbig A.O."/>
            <person name="Slijper M."/>
            <person name="Krijgsveld J."/>
            <person name="Heck A.J."/>
            <person name="Mohammed S."/>
        </authorList>
    </citation>
    <scope>ACETYLATION [LARGE SCALE ANALYSIS] AT ALA-2</scope>
    <scope>CLEAVAGE OF INITIATOR METHIONINE [LARGE SCALE ANALYSIS]</scope>
    <scope>IDENTIFICATION BY MASS SPECTROMETRY [LARGE SCALE ANALYSIS]</scope>
</reference>
<reference key="8">
    <citation type="journal article" date="2011" name="BMC Syst. Biol.">
        <title>Initial characterization of the human central proteome.</title>
        <authorList>
            <person name="Burkard T.R."/>
            <person name="Planyavsky M."/>
            <person name="Kaupe I."/>
            <person name="Breitwieser F.P."/>
            <person name="Buerckstuemmer T."/>
            <person name="Bennett K.L."/>
            <person name="Superti-Furga G."/>
            <person name="Colinge J."/>
        </authorList>
    </citation>
    <scope>IDENTIFICATION BY MASS SPECTROMETRY [LARGE SCALE ANALYSIS]</scope>
</reference>
<reference key="9">
    <citation type="journal article" date="2012" name="Mol. Cell. Proteomics">
        <title>Comparative large-scale characterisation of plant vs. mammal proteins reveals similar and idiosyncratic N-alpha acetylation features.</title>
        <authorList>
            <person name="Bienvenut W.V."/>
            <person name="Sumpton D."/>
            <person name="Martinez A."/>
            <person name="Lilla S."/>
            <person name="Espagne C."/>
            <person name="Meinnel T."/>
            <person name="Giglione C."/>
        </authorList>
    </citation>
    <scope>ACETYLATION [LARGE SCALE ANALYSIS] AT ALA-2</scope>
    <scope>CLEAVAGE OF INITIATOR METHIONINE [LARGE SCALE ANALYSIS]</scope>
    <scope>IDENTIFICATION BY MASS SPECTROMETRY [LARGE SCALE ANALYSIS]</scope>
</reference>
<reference key="10">
    <citation type="journal article" date="2012" name="Proc. Natl. Acad. Sci. U.S.A.">
        <title>N-terminal acetylome analyses and functional insights of the N-terminal acetyltransferase NatB.</title>
        <authorList>
            <person name="Van Damme P."/>
            <person name="Lasa M."/>
            <person name="Polevoda B."/>
            <person name="Gazquez C."/>
            <person name="Elosegui-Artola A."/>
            <person name="Kim D.S."/>
            <person name="De Juan-Pardo E."/>
            <person name="Demeyer K."/>
            <person name="Hole K."/>
            <person name="Larrea E."/>
            <person name="Timmerman E."/>
            <person name="Prieto J."/>
            <person name="Arnesen T."/>
            <person name="Sherman F."/>
            <person name="Gevaert K."/>
            <person name="Aldabe R."/>
        </authorList>
    </citation>
    <scope>ACETYLATION [LARGE SCALE ANALYSIS] AT ALA-2</scope>
    <scope>CLEAVAGE OF INITIATOR METHIONINE [LARGE SCALE ANALYSIS]</scope>
    <scope>IDENTIFICATION BY MASS SPECTROMETRY [LARGE SCALE ANALYSIS]</scope>
</reference>
<reference key="11">
    <citation type="journal article" date="2015" name="Proteomics">
        <title>N-terminome analysis of the human mitochondrial proteome.</title>
        <authorList>
            <person name="Vaca Jacome A.S."/>
            <person name="Rabilloud T."/>
            <person name="Schaeffer-Reiss C."/>
            <person name="Rompais M."/>
            <person name="Ayoub D."/>
            <person name="Lane L."/>
            <person name="Bairoch A."/>
            <person name="Van Dorsselaer A."/>
            <person name="Carapito C."/>
        </authorList>
    </citation>
    <scope>IDENTIFICATION BY MASS SPECTROMETRY [LARGE SCALE ANALYSIS]</scope>
</reference>
<comment type="function">
    <text evidence="1">Probable mitochondrial intermembrane chaperone that participates in the import and insertion of some multi-pass transmembrane proteins into the mitochondrial inner membrane. Also required for the transfer of beta-barrel precursors from the TOM complex to the sorting and assembly machinery (SAM complex) of the outer membrane. Acts as a chaperone-like protein that protects the hydrophobic precursors from aggregation and guide them through the mitochondrial intermembrane space (By similarity).</text>
</comment>
<comment type="subunit">
    <text evidence="1">Heterohexamer; possibly composed of 3 copies of TIMM8B and 3 copies of TIMM13, named soluble 70 kDa complex. Associates with the TIM22 complex, whose core is composed of TIMM22 (By similarity).</text>
</comment>
<comment type="subcellular location">
    <subcellularLocation>
        <location evidence="1">Mitochondrion inner membrane</location>
        <topology evidence="1">Peripheral membrane protein</topology>
        <orientation evidence="1">Intermembrane side</orientation>
    </subcellularLocation>
</comment>
<comment type="tissue specificity">
    <text evidence="2">Ubiquitous, with highest expression in heart, kidney, liver and skeletal muscle.</text>
</comment>
<comment type="domain">
    <text evidence="1">The twin CX3C motif contains 4 conserved Cys residues that form 2 disulfide bonds in the mitochondrial intermembrane space. However, during the transit of TIMM8B from cytoplasm into mitochondrion, the Cys residues probably coordinate zinc, thereby preventing folding and allowing its transfer across mitochondrial outer membrane (By similarity).</text>
</comment>
<comment type="similarity">
    <text evidence="3">Belongs to the small Tim family.</text>
</comment>
<accession>Q9Y5J9</accession>
<accession>B0YJA5</accession>
<accession>Q3KQS9</accession>
<accession>Q9UN04</accession>